<sequence>MQIQNLIAALAGMAVVAEASVTFLDSPLSAALAKRQNKGGNNNNNNNNNNNNNNNNNKNNGGNNQLCLNPNNVQKGSQQAGTPKQGQANSAVDQANFINFCTGQQLTNGEQKTAGSCNGVVMGKIPSQNNMVSTIIKNPPPGGNLQANQQFNVQLKVNNLQAGSFTDAQSTYYSAPQDTNGAGNIIGHVHVTIQDMGNSLTPQNALDPKQFVFFKGIDDAGDGKGNLQATVTGGLPAGNYRVCTMSSASNHQPVLMPVAQRGAQDDCNKFTVGGNGGNGGNGGNGGNGGNGGNGGNGGNGGKNAAVNSGNADNGGNNDGGGGGNDGGNNSANNSGSGNKQGGKQQNGASTGGFPGTSNQFPGKTGTGSGAQTGNANTKTQAGGSASNSATNGNSGTGGKGGATANAIGGIQAPAVTNSGDSSRPFAVNGNTFVNKAAAVQRACDIQRNGCFDAINRGKLTGSTADCDAQLQTCTQQLS</sequence>
<feature type="signal peptide" evidence="1">
    <location>
        <begin position="1"/>
        <end position="19"/>
    </location>
</feature>
<feature type="chain" id="PRO_5003180481" description="Pathogenicity cluster 5 protein d">
    <location>
        <begin position="20"/>
        <end position="478"/>
    </location>
</feature>
<feature type="region of interest" description="Disordered" evidence="3">
    <location>
        <begin position="35"/>
        <end position="89"/>
    </location>
</feature>
<feature type="region of interest" description="Disordered" evidence="3">
    <location>
        <begin position="299"/>
        <end position="400"/>
    </location>
</feature>
<feature type="compositionally biased region" description="Low complexity" evidence="3">
    <location>
        <begin position="38"/>
        <end position="64"/>
    </location>
</feature>
<feature type="compositionally biased region" description="Polar residues" evidence="3">
    <location>
        <begin position="65"/>
        <end position="89"/>
    </location>
</feature>
<feature type="compositionally biased region" description="Gly residues" evidence="3">
    <location>
        <begin position="316"/>
        <end position="326"/>
    </location>
</feature>
<feature type="compositionally biased region" description="Low complexity" evidence="3">
    <location>
        <begin position="327"/>
        <end position="348"/>
    </location>
</feature>
<feature type="compositionally biased region" description="Low complexity" evidence="3">
    <location>
        <begin position="379"/>
        <end position="393"/>
    </location>
</feature>
<feature type="glycosylation site" description="N-linked (GlcNAc...) asparagine" evidence="2">
    <location>
        <position position="328"/>
    </location>
</feature>
<feature type="glycosylation site" description="N-linked (GlcNAc...) asparagine" evidence="2">
    <location>
        <position position="332"/>
    </location>
</feature>
<reference key="1">
    <citation type="journal article" date="2012" name="Nat. Genet.">
        <title>Lifestyle transitions in plant pathogenic Colletotrichum fungi deciphered by genome and transcriptome analyses.</title>
        <authorList>
            <person name="O'Connell R.J."/>
            <person name="Thon M.R."/>
            <person name="Hacquard S."/>
            <person name="Amyotte S.G."/>
            <person name="Kleemann J."/>
            <person name="Torres M.F."/>
            <person name="Damm U."/>
            <person name="Buiate E.A."/>
            <person name="Epstein L."/>
            <person name="Alkan N."/>
            <person name="Altmueller J."/>
            <person name="Alvarado-Balderrama L."/>
            <person name="Bauser C.A."/>
            <person name="Becker C."/>
            <person name="Birren B.W."/>
            <person name="Chen Z."/>
            <person name="Choi J."/>
            <person name="Crouch J.A."/>
            <person name="Duvick J.P."/>
            <person name="Farman M.A."/>
            <person name="Gan P."/>
            <person name="Heiman D."/>
            <person name="Henrissat B."/>
            <person name="Howard R.J."/>
            <person name="Kabbage M."/>
            <person name="Koch C."/>
            <person name="Kracher B."/>
            <person name="Kubo Y."/>
            <person name="Law A.D."/>
            <person name="Lebrun M.-H."/>
            <person name="Lee Y.-H."/>
            <person name="Miyara I."/>
            <person name="Moore N."/>
            <person name="Neumann U."/>
            <person name="Nordstroem K."/>
            <person name="Panaccione D.G."/>
            <person name="Panstruga R."/>
            <person name="Place M."/>
            <person name="Proctor R.H."/>
            <person name="Prusky D."/>
            <person name="Rech G."/>
            <person name="Reinhardt R."/>
            <person name="Rollins J.A."/>
            <person name="Rounsley S."/>
            <person name="Schardl C.L."/>
            <person name="Schwartz D.C."/>
            <person name="Shenoy N."/>
            <person name="Shirasu K."/>
            <person name="Sikhakolli U.R."/>
            <person name="Stueber K."/>
            <person name="Sukno S.A."/>
            <person name="Sweigard J.A."/>
            <person name="Takano Y."/>
            <person name="Takahara H."/>
            <person name="Trail F."/>
            <person name="van der Does H.C."/>
            <person name="Voll L.M."/>
            <person name="Will I."/>
            <person name="Young S."/>
            <person name="Zeng Q."/>
            <person name="Zhang J."/>
            <person name="Zhou S."/>
            <person name="Dickman M.B."/>
            <person name="Schulze-Lefert P."/>
            <person name="Ver Loren van Themaat E."/>
            <person name="Ma L.-J."/>
            <person name="Vaillancourt L.J."/>
        </authorList>
    </citation>
    <scope>NUCLEOTIDE SEQUENCE [LARGE SCALE GENOMIC DNA]</scope>
    <scope>INDUCTION</scope>
    <source>
        <strain>M1.001 / M2 / FGSC 10212</strain>
    </source>
</reference>
<reference key="2">
    <citation type="journal article" date="2008" name="Mol. Plant Microbe Interact.">
        <title>The yeast signal sequence trap identifies secreted proteins of the hemibiotrophic corn pathogen Colletotrichum graminicola.</title>
        <authorList>
            <person name="Krijger J.J."/>
            <person name="Horbach R."/>
            <person name="Behr M."/>
            <person name="Schweizer P."/>
            <person name="Deising H.B."/>
            <person name="Wirsel S.G."/>
        </authorList>
    </citation>
    <scope>SUBCELLULAR LOCATION</scope>
</reference>
<reference key="3">
    <citation type="journal article" date="2016" name="BMC Genomics">
        <title>A Colletotrichum graminicola mutant deficient in the establishment of biotrophy reveals early transcriptional events in the maize anthracnose disease interaction.</title>
        <authorList>
            <person name="Torres M.F."/>
            <person name="Ghaffari N."/>
            <person name="Buiate E.A."/>
            <person name="Moore N."/>
            <person name="Schwartz S."/>
            <person name="Johnson C.D."/>
            <person name="Vaillancourt L.J."/>
        </authorList>
    </citation>
    <scope>INDUCTION</scope>
</reference>
<reference key="4">
    <citation type="journal article" date="2019" name="Environ. Microbiol.">
        <title>Two genes in a pathogenicity gene cluster encoding secreted proteins are required for appressorial penetration and infection of the maize anthracnose fungus Colletotrichum graminicola.</title>
        <authorList>
            <person name="Eisermann I."/>
            <person name="Weihmann F."/>
            <person name="Krijger J.J."/>
            <person name="Kroeling C."/>
            <person name="Hause G."/>
            <person name="Menzel M."/>
            <person name="Pienkny S."/>
            <person name="Kiesow A."/>
            <person name="Deising H.B."/>
            <person name="Wirsel S.G.R."/>
        </authorList>
    </citation>
    <scope>FUNCTION</scope>
    <scope>DISRUPTION PHENOTYPE</scope>
    <scope>SUBCELLULAR LOCATION</scope>
    <scope>INDUCTION</scope>
</reference>
<name>CLU5D_COLGM</name>
<keyword id="KW-0325">Glycoprotein</keyword>
<keyword id="KW-1185">Reference proteome</keyword>
<keyword id="KW-0964">Secreted</keyword>
<keyword id="KW-0732">Signal</keyword>
<keyword id="KW-0843">Virulence</keyword>
<comment type="function">
    <text evidence="7">Secreted protein required for appressorial penetration of intact host epidermal cells and for pathogenicit, but not for subsequent biotrophic and necrotrophic colonization of leaves.</text>
</comment>
<comment type="subcellular location">
    <subcellularLocation>
        <location evidence="4 7">Secreted</location>
    </subcellularLocation>
</comment>
<comment type="induction">
    <text evidence="5 6 7">Expressed at all stages of pathogenesis (PubMed:22885923, PubMed:26956617, PubMed:31599055). Among the most highly expressed genes in appressoria and biotrophic hyphae in planta (PubMed:26956617).</text>
</comment>
<comment type="disruption phenotype">
    <text evidence="7">Leads to virulence defects.</text>
</comment>
<protein>
    <recommendedName>
        <fullName evidence="8">Pathogenicity cluster 5 protein d</fullName>
    </recommendedName>
</protein>
<dbReference type="EMBL" id="GG697345">
    <property type="protein sequence ID" value="EFQ29545.1"/>
    <property type="molecule type" value="Genomic_DNA"/>
</dbReference>
<dbReference type="RefSeq" id="XP_008093565.1">
    <property type="nucleotide sequence ID" value="XM_008095374.1"/>
</dbReference>
<dbReference type="STRING" id="645133.E3QFA7"/>
<dbReference type="GlyCosmos" id="E3QFA7">
    <property type="glycosylation" value="2 sites, No reported glycans"/>
</dbReference>
<dbReference type="EnsemblFungi" id="EFQ29545">
    <property type="protein sequence ID" value="EFQ29545"/>
    <property type="gene ID" value="GLRG_04689"/>
</dbReference>
<dbReference type="GeneID" id="24410054"/>
<dbReference type="VEuPathDB" id="FungiDB:GLRG_04689"/>
<dbReference type="eggNOG" id="ENOG502QU23">
    <property type="taxonomic scope" value="Eukaryota"/>
</dbReference>
<dbReference type="HOGENOM" id="CLU_029378_0_3_1"/>
<dbReference type="OrthoDB" id="2336871at2759"/>
<dbReference type="PHI-base" id="PHI:10749"/>
<dbReference type="Proteomes" id="UP000008782">
    <property type="component" value="Unassembled WGS sequence"/>
</dbReference>
<dbReference type="GO" id="GO:0005576">
    <property type="term" value="C:extracellular region"/>
    <property type="evidence" value="ECO:0007669"/>
    <property type="project" value="UniProtKB-SubCell"/>
</dbReference>
<dbReference type="InterPro" id="IPR053216">
    <property type="entry name" value="Appressorial_penetr-assoc"/>
</dbReference>
<dbReference type="PANTHER" id="PTHR34587:SF2">
    <property type="entry name" value="G-PROTEIN COUPLED RECEPTORS FAMILY 1 PROFILE DOMAIN-CONTAINING PROTEIN"/>
    <property type="match status" value="1"/>
</dbReference>
<dbReference type="PANTHER" id="PTHR34587">
    <property type="entry name" value="VWFA DOMAIN-CONTAINING PROTEIN"/>
    <property type="match status" value="1"/>
</dbReference>
<gene>
    <name evidence="8" type="primary">CLU5d</name>
    <name type="ORF">GLRG_04689</name>
</gene>
<organism>
    <name type="scientific">Colletotrichum graminicola (strain M1.001 / M2 / FGSC 10212)</name>
    <name type="common">Maize anthracnose fungus</name>
    <name type="synonym">Glomerella graminicola</name>
    <dbReference type="NCBI Taxonomy" id="645133"/>
    <lineage>
        <taxon>Eukaryota</taxon>
        <taxon>Fungi</taxon>
        <taxon>Dikarya</taxon>
        <taxon>Ascomycota</taxon>
        <taxon>Pezizomycotina</taxon>
        <taxon>Sordariomycetes</taxon>
        <taxon>Hypocreomycetidae</taxon>
        <taxon>Glomerellales</taxon>
        <taxon>Glomerellaceae</taxon>
        <taxon>Colletotrichum</taxon>
        <taxon>Colletotrichum graminicola species complex</taxon>
    </lineage>
</organism>
<evidence type="ECO:0000255" key="1"/>
<evidence type="ECO:0000255" key="2">
    <source>
        <dbReference type="PROSITE-ProRule" id="PRU00498"/>
    </source>
</evidence>
<evidence type="ECO:0000256" key="3">
    <source>
        <dbReference type="SAM" id="MobiDB-lite"/>
    </source>
</evidence>
<evidence type="ECO:0000269" key="4">
    <source>
    </source>
</evidence>
<evidence type="ECO:0000269" key="5">
    <source>
    </source>
</evidence>
<evidence type="ECO:0000269" key="6">
    <source>
    </source>
</evidence>
<evidence type="ECO:0000269" key="7">
    <source>
    </source>
</evidence>
<evidence type="ECO:0000303" key="8">
    <source>
    </source>
</evidence>
<accession>E3QFA7</accession>
<proteinExistence type="evidence at transcript level"/>